<evidence type="ECO:0000250" key="1"/>
<evidence type="ECO:0000305" key="2"/>
<organism>
    <name type="scientific">Zymoseptoria tritici</name>
    <name type="common">Speckled leaf blotch fungus</name>
    <name type="synonym">Septoria tritici</name>
    <dbReference type="NCBI Taxonomy" id="1047171"/>
    <lineage>
        <taxon>Eukaryota</taxon>
        <taxon>Fungi</taxon>
        <taxon>Dikarya</taxon>
        <taxon>Ascomycota</taxon>
        <taxon>Pezizomycotina</taxon>
        <taxon>Dothideomycetes</taxon>
        <taxon>Dothideomycetidae</taxon>
        <taxon>Mycosphaerellales</taxon>
        <taxon>Mycosphaerellaceae</taxon>
        <taxon>Zymoseptoria</taxon>
    </lineage>
</organism>
<dbReference type="EC" id="1.1.1.85"/>
<dbReference type="EMBL" id="AF156181">
    <property type="protein sequence ID" value="AAD40111.1"/>
    <property type="molecule type" value="Genomic_DNA"/>
</dbReference>
<dbReference type="SMR" id="Q9Y897"/>
<dbReference type="VEuPathDB" id="FungiDB:ZT3D1_G2658"/>
<dbReference type="VEuPathDB" id="FungiDB:ZTRI_2.512"/>
<dbReference type="OMA" id="EYDLGAR"/>
<dbReference type="BRENDA" id="1.1.1.85">
    <property type="organism ID" value="7075"/>
</dbReference>
<dbReference type="UniPathway" id="UPA00048">
    <property type="reaction ID" value="UER00072"/>
</dbReference>
<dbReference type="GO" id="GO:0005829">
    <property type="term" value="C:cytosol"/>
    <property type="evidence" value="ECO:0007669"/>
    <property type="project" value="EnsemblFungi"/>
</dbReference>
<dbReference type="GO" id="GO:0003862">
    <property type="term" value="F:3-isopropylmalate dehydrogenase activity"/>
    <property type="evidence" value="ECO:0007669"/>
    <property type="project" value="UniProtKB-EC"/>
</dbReference>
<dbReference type="GO" id="GO:0000287">
    <property type="term" value="F:magnesium ion binding"/>
    <property type="evidence" value="ECO:0007669"/>
    <property type="project" value="InterPro"/>
</dbReference>
<dbReference type="GO" id="GO:0051287">
    <property type="term" value="F:NAD binding"/>
    <property type="evidence" value="ECO:0007669"/>
    <property type="project" value="InterPro"/>
</dbReference>
<dbReference type="GO" id="GO:0006097">
    <property type="term" value="P:glyoxylate cycle"/>
    <property type="evidence" value="ECO:0007669"/>
    <property type="project" value="EnsemblFungi"/>
</dbReference>
<dbReference type="GO" id="GO:0009098">
    <property type="term" value="P:L-leucine biosynthetic process"/>
    <property type="evidence" value="ECO:0007669"/>
    <property type="project" value="UniProtKB-UniPathway"/>
</dbReference>
<dbReference type="FunFam" id="3.40.718.10:FF:000006">
    <property type="entry name" value="3-isopropylmalate dehydrogenase"/>
    <property type="match status" value="1"/>
</dbReference>
<dbReference type="Gene3D" id="3.40.718.10">
    <property type="entry name" value="Isopropylmalate Dehydrogenase"/>
    <property type="match status" value="1"/>
</dbReference>
<dbReference type="InterPro" id="IPR019818">
    <property type="entry name" value="IsoCit/isopropylmalate_DH_CS"/>
</dbReference>
<dbReference type="InterPro" id="IPR024084">
    <property type="entry name" value="IsoPropMal-DH-like_dom"/>
</dbReference>
<dbReference type="InterPro" id="IPR004429">
    <property type="entry name" value="Isopropylmalate_DH"/>
</dbReference>
<dbReference type="NCBIfam" id="TIGR00169">
    <property type="entry name" value="leuB"/>
    <property type="match status" value="1"/>
</dbReference>
<dbReference type="PANTHER" id="PTHR42979">
    <property type="entry name" value="3-ISOPROPYLMALATE DEHYDROGENASE"/>
    <property type="match status" value="1"/>
</dbReference>
<dbReference type="PANTHER" id="PTHR42979:SF1">
    <property type="entry name" value="3-ISOPROPYLMALATE DEHYDROGENASE"/>
    <property type="match status" value="1"/>
</dbReference>
<dbReference type="Pfam" id="PF00180">
    <property type="entry name" value="Iso_dh"/>
    <property type="match status" value="1"/>
</dbReference>
<dbReference type="SMART" id="SM01329">
    <property type="entry name" value="Iso_dh"/>
    <property type="match status" value="1"/>
</dbReference>
<dbReference type="SUPFAM" id="SSF53659">
    <property type="entry name" value="Isocitrate/Isopropylmalate dehydrogenase-like"/>
    <property type="match status" value="1"/>
</dbReference>
<dbReference type="PROSITE" id="PS00470">
    <property type="entry name" value="IDH_IMDH"/>
    <property type="match status" value="1"/>
</dbReference>
<keyword id="KW-0028">Amino-acid biosynthesis</keyword>
<keyword id="KW-0100">Branched-chain amino acid biosynthesis</keyword>
<keyword id="KW-0963">Cytoplasm</keyword>
<keyword id="KW-0432">Leucine biosynthesis</keyword>
<keyword id="KW-0460">Magnesium</keyword>
<keyword id="KW-0464">Manganese</keyword>
<keyword id="KW-0479">Metal-binding</keyword>
<keyword id="KW-0520">NAD</keyword>
<keyword id="KW-0560">Oxidoreductase</keyword>
<proteinExistence type="inferred from homology"/>
<gene>
    <name type="primary">LEUC</name>
</gene>
<accession>Q9Y897</accession>
<comment type="function">
    <text>Catalyzes the oxidation of 3-carboxy-2-hydroxy-4-methylpentanoate (3-isopropylmalate) to 3-carboxy-4-methyl-2-oxopentanoate. The product decarboxylates to 4-methyl-2 oxopentanoate.</text>
</comment>
<comment type="catalytic activity">
    <reaction>
        <text>(2R,3S)-3-isopropylmalate + NAD(+) = 4-methyl-2-oxopentanoate + CO2 + NADH</text>
        <dbReference type="Rhea" id="RHEA:32271"/>
        <dbReference type="ChEBI" id="CHEBI:16526"/>
        <dbReference type="ChEBI" id="CHEBI:17865"/>
        <dbReference type="ChEBI" id="CHEBI:35121"/>
        <dbReference type="ChEBI" id="CHEBI:57540"/>
        <dbReference type="ChEBI" id="CHEBI:57945"/>
        <dbReference type="EC" id="1.1.1.85"/>
    </reaction>
</comment>
<comment type="cofactor">
    <cofactor evidence="1">
        <name>Mg(2+)</name>
        <dbReference type="ChEBI" id="CHEBI:18420"/>
    </cofactor>
    <cofactor evidence="1">
        <name>Mn(2+)</name>
        <dbReference type="ChEBI" id="CHEBI:29035"/>
    </cofactor>
    <text evidence="1">Binds 1 Mg(2+) or Mn(2+) ion per subunit.</text>
</comment>
<comment type="pathway">
    <text>Amino-acid biosynthesis; L-leucine biosynthesis; L-leucine from 3-methyl-2-oxobutanoate: step 3/4.</text>
</comment>
<comment type="subunit">
    <text evidence="1">Homodimer.</text>
</comment>
<comment type="subcellular location">
    <subcellularLocation>
        <location>Cytoplasm</location>
    </subcellularLocation>
</comment>
<comment type="similarity">
    <text evidence="2">Belongs to the isocitrate and isopropylmalate dehydrogenases family.</text>
</comment>
<protein>
    <recommendedName>
        <fullName>3-isopropylmalate dehydrogenase</fullName>
        <shortName>3-IPM-DH</shortName>
        <shortName>IMDH</shortName>
        <ecNumber>1.1.1.85</ecNumber>
    </recommendedName>
    <alternativeName>
        <fullName>Beta-IPM dehydrogenase</fullName>
    </alternativeName>
</protein>
<reference key="1">
    <citation type="submission" date="1999-06" db="EMBL/GenBank/DDBJ databases">
        <title>A gene encoding 3-isopropylmalate dehydrogenase from the wheat leaf spot pathogen Mycosphaerella graminicola.</title>
        <authorList>
            <person name="Skinner W.S."/>
            <person name="Hargreaves J.A."/>
            <person name="Bailey A.M."/>
        </authorList>
    </citation>
    <scope>NUCLEOTIDE SEQUENCE [GENOMIC DNA]</scope>
    <source>
        <strain>Strit1</strain>
    </source>
</reference>
<name>LEU3_ZYMTR</name>
<feature type="chain" id="PRO_0000083612" description="3-isopropylmalate dehydrogenase">
    <location>
        <begin position="1"/>
        <end position="365"/>
    </location>
</feature>
<feature type="binding site" evidence="1">
    <location>
        <begin position="78"/>
        <end position="89"/>
    </location>
    <ligand>
        <name>NAD(+)</name>
        <dbReference type="ChEBI" id="CHEBI:57540"/>
    </ligand>
</feature>
<feature type="binding site" evidence="1">
    <location>
        <position position="96"/>
    </location>
    <ligand>
        <name>substrate</name>
    </ligand>
</feature>
<feature type="binding site" evidence="1">
    <location>
        <position position="106"/>
    </location>
    <ligand>
        <name>substrate</name>
    </ligand>
</feature>
<feature type="binding site" evidence="1">
    <location>
        <position position="135"/>
    </location>
    <ligand>
        <name>substrate</name>
    </ligand>
</feature>
<feature type="binding site" evidence="1">
    <location>
        <position position="224"/>
    </location>
    <ligand>
        <name>Mg(2+)</name>
        <dbReference type="ChEBI" id="CHEBI:18420"/>
    </ligand>
</feature>
<feature type="binding site" evidence="1">
    <location>
        <position position="224"/>
    </location>
    <ligand>
        <name>substrate</name>
    </ligand>
</feature>
<feature type="binding site" evidence="1">
    <location>
        <position position="249"/>
    </location>
    <ligand>
        <name>Mg(2+)</name>
        <dbReference type="ChEBI" id="CHEBI:18420"/>
    </ligand>
</feature>
<feature type="binding site" evidence="1">
    <location>
        <position position="253"/>
    </location>
    <ligand>
        <name>Mg(2+)</name>
        <dbReference type="ChEBI" id="CHEBI:18420"/>
    </ligand>
</feature>
<feature type="binding site" evidence="1">
    <location>
        <begin position="289"/>
        <end position="301"/>
    </location>
    <ligand>
        <name>NAD(+)</name>
        <dbReference type="ChEBI" id="CHEBI:57540"/>
    </ligand>
</feature>
<feature type="site" description="Important for catalysis" evidence="1">
    <location>
        <position position="142"/>
    </location>
</feature>
<feature type="site" description="Important for catalysis" evidence="1">
    <location>
        <position position="191"/>
    </location>
</feature>
<sequence length="365" mass="38760">MPTYNIVVFGGDHCGPEVTAEALKVLDVIDNSNADVHFNIQPHLLGGASIDAHGEPLTDEALAAAKAADAVILGAIGGPKWGTGKVRPEQGILRLRKEMGTYGNLRPCFFASESLVKTSPLKEEVCRGVNFNIVRELTGGIYFGERTEDDGSGYAVDTEPYSRAEIERVARLAGFLALAEDPPCPVWSLDKANVMATSRLWRKTVTDVFANEFPQLKIGHHLIDSAAMLMVKNPRALNGVIVTSNLFGDIISDEASVIPGSLGLLPSASLTASPDGKSKCNGIYEPIHGSAPDISGKGIVNPVAMILSLGMMCKYSLQQPELAKKIDEAVRNVIEKGINTADIGGSAKTAEVGDAIAKELEALLK</sequence>